<gene>
    <name type="primary">yoqG</name>
    <name type="ordered locus">BSU20640</name>
</gene>
<proteinExistence type="predicted"/>
<sequence length="85" mass="9945">MEKMNLLKEITIFDLNKIKPGTKVQVTWYKGTEMEYTHNGEVIINNGEKFYYNYVDKEGYVGHCHVNALDLKNYPDSLIVEIKSK</sequence>
<protein>
    <recommendedName>
        <fullName>SPbeta prophage-derived uncharacterized protein YoqG</fullName>
    </recommendedName>
</protein>
<reference key="1">
    <citation type="journal article" date="1997" name="Nature">
        <title>The complete genome sequence of the Gram-positive bacterium Bacillus subtilis.</title>
        <authorList>
            <person name="Kunst F."/>
            <person name="Ogasawara N."/>
            <person name="Moszer I."/>
            <person name="Albertini A.M."/>
            <person name="Alloni G."/>
            <person name="Azevedo V."/>
            <person name="Bertero M.G."/>
            <person name="Bessieres P."/>
            <person name="Bolotin A."/>
            <person name="Borchert S."/>
            <person name="Borriss R."/>
            <person name="Boursier L."/>
            <person name="Brans A."/>
            <person name="Braun M."/>
            <person name="Brignell S.C."/>
            <person name="Bron S."/>
            <person name="Brouillet S."/>
            <person name="Bruschi C.V."/>
            <person name="Caldwell B."/>
            <person name="Capuano V."/>
            <person name="Carter N.M."/>
            <person name="Choi S.-K."/>
            <person name="Codani J.-J."/>
            <person name="Connerton I.F."/>
            <person name="Cummings N.J."/>
            <person name="Daniel R.A."/>
            <person name="Denizot F."/>
            <person name="Devine K.M."/>
            <person name="Duesterhoeft A."/>
            <person name="Ehrlich S.D."/>
            <person name="Emmerson P.T."/>
            <person name="Entian K.-D."/>
            <person name="Errington J."/>
            <person name="Fabret C."/>
            <person name="Ferrari E."/>
            <person name="Foulger D."/>
            <person name="Fritz C."/>
            <person name="Fujita M."/>
            <person name="Fujita Y."/>
            <person name="Fuma S."/>
            <person name="Galizzi A."/>
            <person name="Galleron N."/>
            <person name="Ghim S.-Y."/>
            <person name="Glaser P."/>
            <person name="Goffeau A."/>
            <person name="Golightly E.J."/>
            <person name="Grandi G."/>
            <person name="Guiseppi G."/>
            <person name="Guy B.J."/>
            <person name="Haga K."/>
            <person name="Haiech J."/>
            <person name="Harwood C.R."/>
            <person name="Henaut A."/>
            <person name="Hilbert H."/>
            <person name="Holsappel S."/>
            <person name="Hosono S."/>
            <person name="Hullo M.-F."/>
            <person name="Itaya M."/>
            <person name="Jones L.-M."/>
            <person name="Joris B."/>
            <person name="Karamata D."/>
            <person name="Kasahara Y."/>
            <person name="Klaerr-Blanchard M."/>
            <person name="Klein C."/>
            <person name="Kobayashi Y."/>
            <person name="Koetter P."/>
            <person name="Koningstein G."/>
            <person name="Krogh S."/>
            <person name="Kumano M."/>
            <person name="Kurita K."/>
            <person name="Lapidus A."/>
            <person name="Lardinois S."/>
            <person name="Lauber J."/>
            <person name="Lazarevic V."/>
            <person name="Lee S.-M."/>
            <person name="Levine A."/>
            <person name="Liu H."/>
            <person name="Masuda S."/>
            <person name="Mauel C."/>
            <person name="Medigue C."/>
            <person name="Medina N."/>
            <person name="Mellado R.P."/>
            <person name="Mizuno M."/>
            <person name="Moestl D."/>
            <person name="Nakai S."/>
            <person name="Noback M."/>
            <person name="Noone D."/>
            <person name="O'Reilly M."/>
            <person name="Ogawa K."/>
            <person name="Ogiwara A."/>
            <person name="Oudega B."/>
            <person name="Park S.-H."/>
            <person name="Parro V."/>
            <person name="Pohl T.M."/>
            <person name="Portetelle D."/>
            <person name="Porwollik S."/>
            <person name="Prescott A.M."/>
            <person name="Presecan E."/>
            <person name="Pujic P."/>
            <person name="Purnelle B."/>
            <person name="Rapoport G."/>
            <person name="Rey M."/>
            <person name="Reynolds S."/>
            <person name="Rieger M."/>
            <person name="Rivolta C."/>
            <person name="Rocha E."/>
            <person name="Roche B."/>
            <person name="Rose M."/>
            <person name="Sadaie Y."/>
            <person name="Sato T."/>
            <person name="Scanlan E."/>
            <person name="Schleich S."/>
            <person name="Schroeter R."/>
            <person name="Scoffone F."/>
            <person name="Sekiguchi J."/>
            <person name="Sekowska A."/>
            <person name="Seror S.J."/>
            <person name="Serror P."/>
            <person name="Shin B.-S."/>
            <person name="Soldo B."/>
            <person name="Sorokin A."/>
            <person name="Tacconi E."/>
            <person name="Takagi T."/>
            <person name="Takahashi H."/>
            <person name="Takemaru K."/>
            <person name="Takeuchi M."/>
            <person name="Tamakoshi A."/>
            <person name="Tanaka T."/>
            <person name="Terpstra P."/>
            <person name="Tognoni A."/>
            <person name="Tosato V."/>
            <person name="Uchiyama S."/>
            <person name="Vandenbol M."/>
            <person name="Vannier F."/>
            <person name="Vassarotti A."/>
            <person name="Viari A."/>
            <person name="Wambutt R."/>
            <person name="Wedler E."/>
            <person name="Wedler H."/>
            <person name="Weitzenegger T."/>
            <person name="Winters P."/>
            <person name="Wipat A."/>
            <person name="Yamamoto H."/>
            <person name="Yamane K."/>
            <person name="Yasumoto K."/>
            <person name="Yata K."/>
            <person name="Yoshida K."/>
            <person name="Yoshikawa H.-F."/>
            <person name="Zumstein E."/>
            <person name="Yoshikawa H."/>
            <person name="Danchin A."/>
        </authorList>
    </citation>
    <scope>NUCLEOTIDE SEQUENCE [LARGE SCALE GENOMIC DNA]</scope>
    <source>
        <strain>168</strain>
    </source>
</reference>
<keyword id="KW-1185">Reference proteome</keyword>
<dbReference type="EMBL" id="AL009126">
    <property type="protein sequence ID" value="CAB13956.1"/>
    <property type="molecule type" value="Genomic_DNA"/>
</dbReference>
<dbReference type="RefSeq" id="NP_389946.1">
    <property type="nucleotide sequence ID" value="NC_000964.3"/>
</dbReference>
<dbReference type="RefSeq" id="WP_004399295.1">
    <property type="nucleotide sequence ID" value="NZ_OZ025638.1"/>
</dbReference>
<dbReference type="SMR" id="O35030"/>
<dbReference type="FunCoup" id="O35030">
    <property type="interactions" value="64"/>
</dbReference>
<dbReference type="STRING" id="224308.BSU20640"/>
<dbReference type="PaxDb" id="224308-BSU20640"/>
<dbReference type="EnsemblBacteria" id="CAB13956">
    <property type="protein sequence ID" value="CAB13956"/>
    <property type="gene ID" value="BSU_20640"/>
</dbReference>
<dbReference type="GeneID" id="936494"/>
<dbReference type="KEGG" id="bsu:BSU20640"/>
<dbReference type="PATRIC" id="fig|224308.179.peg.2254"/>
<dbReference type="InParanoid" id="O35030"/>
<dbReference type="OrthoDB" id="2890593at2"/>
<dbReference type="BioCyc" id="BSUB:BSU20640-MONOMER"/>
<dbReference type="Proteomes" id="UP000001570">
    <property type="component" value="Chromosome"/>
</dbReference>
<organism>
    <name type="scientific">Bacillus subtilis (strain 168)</name>
    <dbReference type="NCBI Taxonomy" id="224308"/>
    <lineage>
        <taxon>Bacteria</taxon>
        <taxon>Bacillati</taxon>
        <taxon>Bacillota</taxon>
        <taxon>Bacilli</taxon>
        <taxon>Bacillales</taxon>
        <taxon>Bacillaceae</taxon>
        <taxon>Bacillus</taxon>
    </lineage>
</organism>
<name>YOQG_BACSU</name>
<accession>O35030</accession>
<feature type="chain" id="PRO_0000372596" description="SPbeta prophage-derived uncharacterized protein YoqG">
    <location>
        <begin position="1"/>
        <end position="85"/>
    </location>
</feature>